<comment type="function">
    <text evidence="1">Involved in the control of energetic metabolism and significantly contribute to cell fitness, especially under respiratory growth conditions.</text>
</comment>
<comment type="subcellular location">
    <subcellularLocation>
        <location evidence="1">Cell membrane</location>
        <topology evidence="1">Peripheral membrane protein</topology>
    </subcellularLocation>
</comment>
<comment type="similarity">
    <text evidence="3">Belongs to the RGI1 family.</text>
</comment>
<gene>
    <name type="primary">RGI1</name>
    <name type="ORF">EC1118_1E8_1805g</name>
</gene>
<accession>C8Z773</accession>
<feature type="chain" id="PRO_0000402296" description="Respiratory growth induced protein 1">
    <location>
        <begin position="1"/>
        <end position="161"/>
    </location>
</feature>
<feature type="cross-link" description="Glycyl lysine isopeptide (Lys-Gly) (interchain with G-Cter in ubiquitin)" evidence="2">
    <location>
        <position position="68"/>
    </location>
</feature>
<evidence type="ECO:0000250" key="1"/>
<evidence type="ECO:0000250" key="2">
    <source>
        <dbReference type="UniProtKB" id="P40043"/>
    </source>
</evidence>
<evidence type="ECO:0000305" key="3"/>
<dbReference type="EMBL" id="FN393067">
    <property type="protein sequence ID" value="CAY79239.1"/>
    <property type="molecule type" value="Genomic_DNA"/>
</dbReference>
<dbReference type="SMR" id="C8Z773"/>
<dbReference type="TopDownProteomics" id="C8Z773"/>
<dbReference type="HOGENOM" id="CLU_118207_0_0_1"/>
<dbReference type="OrthoDB" id="15655at4893"/>
<dbReference type="Proteomes" id="UP000000286">
    <property type="component" value="Chromosome V, Scaffold EC1118_1E8"/>
</dbReference>
<dbReference type="GO" id="GO:0005886">
    <property type="term" value="C:plasma membrane"/>
    <property type="evidence" value="ECO:0007669"/>
    <property type="project" value="UniProtKB-SubCell"/>
</dbReference>
<dbReference type="GO" id="GO:0006112">
    <property type="term" value="P:energy reserve metabolic process"/>
    <property type="evidence" value="ECO:0007669"/>
    <property type="project" value="InterPro"/>
</dbReference>
<dbReference type="FunFam" id="3.40.1000.40:FF:000001">
    <property type="entry name" value="Respiratory growth induced protein 2"/>
    <property type="match status" value="1"/>
</dbReference>
<dbReference type="Gene3D" id="3.40.1000.40">
    <property type="entry name" value="Respiratory growth induced protein 1"/>
    <property type="match status" value="1"/>
</dbReference>
<dbReference type="InterPro" id="IPR022554">
    <property type="entry name" value="RGI1"/>
</dbReference>
<dbReference type="InterPro" id="IPR038235">
    <property type="entry name" value="RGI1_sf"/>
</dbReference>
<dbReference type="Pfam" id="PF10843">
    <property type="entry name" value="RGI1"/>
    <property type="match status" value="1"/>
</dbReference>
<proteinExistence type="inferred from homology"/>
<organism>
    <name type="scientific">Saccharomyces cerevisiae (strain Lalvin EC1118 / Prise de mousse)</name>
    <name type="common">Baker's yeast</name>
    <dbReference type="NCBI Taxonomy" id="643680"/>
    <lineage>
        <taxon>Eukaryota</taxon>
        <taxon>Fungi</taxon>
        <taxon>Dikarya</taxon>
        <taxon>Ascomycota</taxon>
        <taxon>Saccharomycotina</taxon>
        <taxon>Saccharomycetes</taxon>
        <taxon>Saccharomycetales</taxon>
        <taxon>Saccharomycetaceae</taxon>
        <taxon>Saccharomyces</taxon>
    </lineage>
</organism>
<sequence length="161" mass="18989">MTKKDKKEVKVQTVTTEDGETVKVFEDLQGFETFIANETEDDDFDHLHCKLNYYPPFVLHESHEDPEKISDAANSHSKKFVRHLHQHIEKHLLKDIKQAVRKPELKFHEKSKEETFDKITWHYGEETEYHGRPFKIDVQVVCTHEDAMVFVDYKTHPVGAN</sequence>
<keyword id="KW-1003">Cell membrane</keyword>
<keyword id="KW-1017">Isopeptide bond</keyword>
<keyword id="KW-0472">Membrane</keyword>
<keyword id="KW-0832">Ubl conjugation</keyword>
<protein>
    <recommendedName>
        <fullName>Respiratory growth induced protein 1</fullName>
    </recommendedName>
</protein>
<name>RGI1_YEAS8</name>
<reference key="1">
    <citation type="journal article" date="2009" name="Proc. Natl. Acad. Sci. U.S.A.">
        <title>Eukaryote-to-eukaryote gene transfer events revealed by the genome sequence of the wine yeast Saccharomyces cerevisiae EC1118.</title>
        <authorList>
            <person name="Novo M."/>
            <person name="Bigey F."/>
            <person name="Beyne E."/>
            <person name="Galeote V."/>
            <person name="Gavory F."/>
            <person name="Mallet S."/>
            <person name="Cambon B."/>
            <person name="Legras J.-L."/>
            <person name="Wincker P."/>
            <person name="Casaregola S."/>
            <person name="Dequin S."/>
        </authorList>
    </citation>
    <scope>NUCLEOTIDE SEQUENCE [LARGE SCALE GENOMIC DNA]</scope>
    <source>
        <strain>Lalvin EC1118 / Prise de mousse</strain>
    </source>
</reference>